<accession>Q0VSU5</accession>
<organism>
    <name type="scientific">Alcanivorax borkumensis (strain ATCC 700651 / DSM 11573 / NCIMB 13689 / SK2)</name>
    <dbReference type="NCBI Taxonomy" id="393595"/>
    <lineage>
        <taxon>Bacteria</taxon>
        <taxon>Pseudomonadati</taxon>
        <taxon>Pseudomonadota</taxon>
        <taxon>Gammaproteobacteria</taxon>
        <taxon>Oceanospirillales</taxon>
        <taxon>Alcanivoracaceae</taxon>
        <taxon>Alcanivorax</taxon>
    </lineage>
</organism>
<evidence type="ECO:0000255" key="1">
    <source>
        <dbReference type="HAMAP-Rule" id="MF_00023"/>
    </source>
</evidence>
<evidence type="ECO:0000256" key="2">
    <source>
        <dbReference type="SAM" id="MobiDB-lite"/>
    </source>
</evidence>
<evidence type="ECO:0000305" key="3"/>
<sequence>MGKANKKAKAPSATIAQNRKARHEYHLEEHFEAGLVLEGWEVKSLRAGKGNLTEAYVLLKNGEAFLFGARFEPLNTASTHVNPDPTRTRKLLLHRRELGRVFGGVQKDGFTCVPVSLYWKKGFAKCDIALAKGKQKFDKRATEKERDWNRQKQRVLRQR</sequence>
<name>SSRP_ALCBS</name>
<dbReference type="EMBL" id="AM286690">
    <property type="protein sequence ID" value="CAL15753.1"/>
    <property type="status" value="ALT_INIT"/>
    <property type="molecule type" value="Genomic_DNA"/>
</dbReference>
<dbReference type="RefSeq" id="WP_035459423.1">
    <property type="nucleotide sequence ID" value="NC_008260.1"/>
</dbReference>
<dbReference type="SMR" id="Q0VSU5"/>
<dbReference type="STRING" id="393595.ABO_0305"/>
<dbReference type="KEGG" id="abo:ABO_0305"/>
<dbReference type="eggNOG" id="COG0691">
    <property type="taxonomic scope" value="Bacteria"/>
</dbReference>
<dbReference type="HOGENOM" id="CLU_108953_3_0_6"/>
<dbReference type="OrthoDB" id="9805462at2"/>
<dbReference type="Proteomes" id="UP000008871">
    <property type="component" value="Chromosome"/>
</dbReference>
<dbReference type="GO" id="GO:0005829">
    <property type="term" value="C:cytosol"/>
    <property type="evidence" value="ECO:0007669"/>
    <property type="project" value="TreeGrafter"/>
</dbReference>
<dbReference type="GO" id="GO:0003723">
    <property type="term" value="F:RNA binding"/>
    <property type="evidence" value="ECO:0007669"/>
    <property type="project" value="UniProtKB-UniRule"/>
</dbReference>
<dbReference type="GO" id="GO:0070929">
    <property type="term" value="P:trans-translation"/>
    <property type="evidence" value="ECO:0007669"/>
    <property type="project" value="UniProtKB-UniRule"/>
</dbReference>
<dbReference type="CDD" id="cd09294">
    <property type="entry name" value="SmpB"/>
    <property type="match status" value="1"/>
</dbReference>
<dbReference type="Gene3D" id="2.40.280.10">
    <property type="match status" value="1"/>
</dbReference>
<dbReference type="HAMAP" id="MF_00023">
    <property type="entry name" value="SmpB"/>
    <property type="match status" value="1"/>
</dbReference>
<dbReference type="InterPro" id="IPR023620">
    <property type="entry name" value="SmpB"/>
</dbReference>
<dbReference type="InterPro" id="IPR000037">
    <property type="entry name" value="SsrA-bd_prot"/>
</dbReference>
<dbReference type="InterPro" id="IPR020081">
    <property type="entry name" value="SsrA-bd_prot_CS"/>
</dbReference>
<dbReference type="NCBIfam" id="NF003843">
    <property type="entry name" value="PRK05422.1"/>
    <property type="match status" value="1"/>
</dbReference>
<dbReference type="NCBIfam" id="TIGR00086">
    <property type="entry name" value="smpB"/>
    <property type="match status" value="1"/>
</dbReference>
<dbReference type="PANTHER" id="PTHR30308:SF2">
    <property type="entry name" value="SSRA-BINDING PROTEIN"/>
    <property type="match status" value="1"/>
</dbReference>
<dbReference type="PANTHER" id="PTHR30308">
    <property type="entry name" value="TMRNA-BINDING COMPONENT OF TRANS-TRANSLATION TAGGING COMPLEX"/>
    <property type="match status" value="1"/>
</dbReference>
<dbReference type="Pfam" id="PF01668">
    <property type="entry name" value="SmpB"/>
    <property type="match status" value="1"/>
</dbReference>
<dbReference type="SUPFAM" id="SSF74982">
    <property type="entry name" value="Small protein B (SmpB)"/>
    <property type="match status" value="1"/>
</dbReference>
<dbReference type="PROSITE" id="PS01317">
    <property type="entry name" value="SSRP"/>
    <property type="match status" value="1"/>
</dbReference>
<gene>
    <name evidence="1" type="primary">smpB</name>
    <name type="ordered locus">ABO_0305</name>
</gene>
<feature type="chain" id="PRO_0000331017" description="SsrA-binding protein">
    <location>
        <begin position="1"/>
        <end position="159"/>
    </location>
</feature>
<feature type="region of interest" description="Disordered" evidence="2">
    <location>
        <begin position="140"/>
        <end position="159"/>
    </location>
</feature>
<feature type="compositionally biased region" description="Basic and acidic residues" evidence="2">
    <location>
        <begin position="140"/>
        <end position="150"/>
    </location>
</feature>
<reference key="1">
    <citation type="journal article" date="2006" name="Nat. Biotechnol.">
        <title>Genome sequence of the ubiquitous hydrocarbon-degrading marine bacterium Alcanivorax borkumensis.</title>
        <authorList>
            <person name="Schneiker S."/>
            <person name="Martins dos Santos V.A.P."/>
            <person name="Bartels D."/>
            <person name="Bekel T."/>
            <person name="Brecht M."/>
            <person name="Buhrmester J."/>
            <person name="Chernikova T.N."/>
            <person name="Denaro R."/>
            <person name="Ferrer M."/>
            <person name="Gertler C."/>
            <person name="Goesmann A."/>
            <person name="Golyshina O.V."/>
            <person name="Kaminski F."/>
            <person name="Khachane A.N."/>
            <person name="Lang S."/>
            <person name="Linke B."/>
            <person name="McHardy A.C."/>
            <person name="Meyer F."/>
            <person name="Nechitaylo T."/>
            <person name="Puehler A."/>
            <person name="Regenhardt D."/>
            <person name="Rupp O."/>
            <person name="Sabirova J.S."/>
            <person name="Selbitschka W."/>
            <person name="Yakimov M.M."/>
            <person name="Timmis K.N."/>
            <person name="Vorhoelter F.-J."/>
            <person name="Weidner S."/>
            <person name="Kaiser O."/>
            <person name="Golyshin P.N."/>
        </authorList>
    </citation>
    <scope>NUCLEOTIDE SEQUENCE [LARGE SCALE GENOMIC DNA]</scope>
    <source>
        <strain>ATCC 700651 / DSM 11573 / NCIMB 13689 / SK2</strain>
    </source>
</reference>
<comment type="function">
    <text evidence="1">Required for rescue of stalled ribosomes mediated by trans-translation. Binds to transfer-messenger RNA (tmRNA), required for stable association of tmRNA with ribosomes. tmRNA and SmpB together mimic tRNA shape, replacing the anticodon stem-loop with SmpB. tmRNA is encoded by the ssrA gene; the 2 termini fold to resemble tRNA(Ala) and it encodes a 'tag peptide', a short internal open reading frame. During trans-translation Ala-aminoacylated tmRNA acts like a tRNA, entering the A-site of stalled ribosomes, displacing the stalled mRNA. The ribosome then switches to translate the ORF on the tmRNA; the nascent peptide is terminated with the 'tag peptide' encoded by the tmRNA and targeted for degradation. The ribosome is freed to recommence translation, which seems to be the essential function of trans-translation.</text>
</comment>
<comment type="subcellular location">
    <subcellularLocation>
        <location evidence="1">Cytoplasm</location>
    </subcellularLocation>
    <text evidence="1">The tmRNA-SmpB complex associates with stalled 70S ribosomes.</text>
</comment>
<comment type="similarity">
    <text evidence="1">Belongs to the SmpB family.</text>
</comment>
<comment type="sequence caution" evidence="3">
    <conflict type="erroneous initiation">
        <sequence resource="EMBL-CDS" id="CAL15753"/>
    </conflict>
    <text>Extended N-terminus.</text>
</comment>
<keyword id="KW-0963">Cytoplasm</keyword>
<keyword id="KW-1185">Reference proteome</keyword>
<keyword id="KW-0694">RNA-binding</keyword>
<protein>
    <recommendedName>
        <fullName evidence="1">SsrA-binding protein</fullName>
    </recommendedName>
    <alternativeName>
        <fullName evidence="1">Small protein B</fullName>
    </alternativeName>
</protein>
<proteinExistence type="inferred from homology"/>